<dbReference type="EMBL" id="BA000033">
    <property type="protein sequence ID" value="BAB96030.1"/>
    <property type="molecule type" value="Genomic_DNA"/>
</dbReference>
<dbReference type="RefSeq" id="WP_000124353.1">
    <property type="nucleotide sequence ID" value="NC_003923.1"/>
</dbReference>
<dbReference type="SMR" id="P66495"/>
<dbReference type="GeneID" id="98346558"/>
<dbReference type="KEGG" id="sam:MW2165"/>
<dbReference type="HOGENOM" id="CLU_144911_0_1_9"/>
<dbReference type="GO" id="GO:0005737">
    <property type="term" value="C:cytoplasm"/>
    <property type="evidence" value="ECO:0007669"/>
    <property type="project" value="UniProtKB-ARBA"/>
</dbReference>
<dbReference type="GO" id="GO:0015935">
    <property type="term" value="C:small ribosomal subunit"/>
    <property type="evidence" value="ECO:0007669"/>
    <property type="project" value="InterPro"/>
</dbReference>
<dbReference type="GO" id="GO:0019843">
    <property type="term" value="F:rRNA binding"/>
    <property type="evidence" value="ECO:0007669"/>
    <property type="project" value="UniProtKB-UniRule"/>
</dbReference>
<dbReference type="GO" id="GO:0003735">
    <property type="term" value="F:structural constituent of ribosome"/>
    <property type="evidence" value="ECO:0007669"/>
    <property type="project" value="InterPro"/>
</dbReference>
<dbReference type="GO" id="GO:0000028">
    <property type="term" value="P:ribosomal small subunit assembly"/>
    <property type="evidence" value="ECO:0007669"/>
    <property type="project" value="TreeGrafter"/>
</dbReference>
<dbReference type="GO" id="GO:0006412">
    <property type="term" value="P:translation"/>
    <property type="evidence" value="ECO:0007669"/>
    <property type="project" value="UniProtKB-UniRule"/>
</dbReference>
<dbReference type="FunFam" id="3.30.860.10:FF:000001">
    <property type="entry name" value="30S ribosomal protein S19"/>
    <property type="match status" value="1"/>
</dbReference>
<dbReference type="Gene3D" id="3.30.860.10">
    <property type="entry name" value="30s Ribosomal Protein S19, Chain A"/>
    <property type="match status" value="1"/>
</dbReference>
<dbReference type="HAMAP" id="MF_00531">
    <property type="entry name" value="Ribosomal_uS19"/>
    <property type="match status" value="1"/>
</dbReference>
<dbReference type="InterPro" id="IPR002222">
    <property type="entry name" value="Ribosomal_uS19"/>
</dbReference>
<dbReference type="InterPro" id="IPR005732">
    <property type="entry name" value="Ribosomal_uS19_bac-type"/>
</dbReference>
<dbReference type="InterPro" id="IPR020934">
    <property type="entry name" value="Ribosomal_uS19_CS"/>
</dbReference>
<dbReference type="InterPro" id="IPR023575">
    <property type="entry name" value="Ribosomal_uS19_SF"/>
</dbReference>
<dbReference type="NCBIfam" id="TIGR01050">
    <property type="entry name" value="rpsS_bact"/>
    <property type="match status" value="1"/>
</dbReference>
<dbReference type="PANTHER" id="PTHR11880">
    <property type="entry name" value="RIBOSOMAL PROTEIN S19P FAMILY MEMBER"/>
    <property type="match status" value="1"/>
</dbReference>
<dbReference type="PANTHER" id="PTHR11880:SF8">
    <property type="entry name" value="SMALL RIBOSOMAL SUBUNIT PROTEIN US19M"/>
    <property type="match status" value="1"/>
</dbReference>
<dbReference type="Pfam" id="PF00203">
    <property type="entry name" value="Ribosomal_S19"/>
    <property type="match status" value="1"/>
</dbReference>
<dbReference type="PIRSF" id="PIRSF002144">
    <property type="entry name" value="Ribosomal_S19"/>
    <property type="match status" value="1"/>
</dbReference>
<dbReference type="PRINTS" id="PR00975">
    <property type="entry name" value="RIBOSOMALS19"/>
</dbReference>
<dbReference type="SUPFAM" id="SSF54570">
    <property type="entry name" value="Ribosomal protein S19"/>
    <property type="match status" value="1"/>
</dbReference>
<dbReference type="PROSITE" id="PS00323">
    <property type="entry name" value="RIBOSOMAL_S19"/>
    <property type="match status" value="1"/>
</dbReference>
<gene>
    <name evidence="1" type="primary">rpsS</name>
    <name type="ordered locus">MW2165</name>
</gene>
<accession>P66495</accession>
<accession>Q99S25</accession>
<sequence>MARSIKKGPFVDEHLMKKVEAQEGSEKKQVIKTWSRRSTIFPNFIGHTFAVYDGRKHVPVYVTEDMVGHKLGEFAPTRTFKGHVADDKKTRR</sequence>
<evidence type="ECO:0000255" key="1">
    <source>
        <dbReference type="HAMAP-Rule" id="MF_00531"/>
    </source>
</evidence>
<evidence type="ECO:0000305" key="2"/>
<protein>
    <recommendedName>
        <fullName evidence="1">Small ribosomal subunit protein uS19</fullName>
    </recommendedName>
    <alternativeName>
        <fullName evidence="2">30S ribosomal protein S19</fullName>
    </alternativeName>
</protein>
<reference key="1">
    <citation type="journal article" date="2002" name="Lancet">
        <title>Genome and virulence determinants of high virulence community-acquired MRSA.</title>
        <authorList>
            <person name="Baba T."/>
            <person name="Takeuchi F."/>
            <person name="Kuroda M."/>
            <person name="Yuzawa H."/>
            <person name="Aoki K."/>
            <person name="Oguchi A."/>
            <person name="Nagai Y."/>
            <person name="Iwama N."/>
            <person name="Asano K."/>
            <person name="Naimi T."/>
            <person name="Kuroda H."/>
            <person name="Cui L."/>
            <person name="Yamamoto K."/>
            <person name="Hiramatsu K."/>
        </authorList>
    </citation>
    <scope>NUCLEOTIDE SEQUENCE [LARGE SCALE GENOMIC DNA]</scope>
    <source>
        <strain>MW2</strain>
    </source>
</reference>
<name>RS19_STAAW</name>
<organism>
    <name type="scientific">Staphylococcus aureus (strain MW2)</name>
    <dbReference type="NCBI Taxonomy" id="196620"/>
    <lineage>
        <taxon>Bacteria</taxon>
        <taxon>Bacillati</taxon>
        <taxon>Bacillota</taxon>
        <taxon>Bacilli</taxon>
        <taxon>Bacillales</taxon>
        <taxon>Staphylococcaceae</taxon>
        <taxon>Staphylococcus</taxon>
    </lineage>
</organism>
<feature type="chain" id="PRO_0000129904" description="Small ribosomal subunit protein uS19">
    <location>
        <begin position="1"/>
        <end position="92"/>
    </location>
</feature>
<keyword id="KW-0687">Ribonucleoprotein</keyword>
<keyword id="KW-0689">Ribosomal protein</keyword>
<keyword id="KW-0694">RNA-binding</keyword>
<keyword id="KW-0699">rRNA-binding</keyword>
<proteinExistence type="inferred from homology"/>
<comment type="function">
    <text evidence="1">Protein S19 forms a complex with S13 that binds strongly to the 16S ribosomal RNA.</text>
</comment>
<comment type="similarity">
    <text evidence="1">Belongs to the universal ribosomal protein uS19 family.</text>
</comment>